<organism>
    <name type="scientific">Escherichia coli</name>
    <dbReference type="NCBI Taxonomy" id="562"/>
    <lineage>
        <taxon>Bacteria</taxon>
        <taxon>Pseudomonadati</taxon>
        <taxon>Pseudomonadota</taxon>
        <taxon>Gammaproteobacteria</taxon>
        <taxon>Enterobacterales</taxon>
        <taxon>Enterobacteriaceae</taxon>
        <taxon>Escherichia</taxon>
    </lineage>
</organism>
<keyword id="KW-1003">Cell membrane</keyword>
<keyword id="KW-0963">Cytoplasm</keyword>
<keyword id="KW-0903">Direct protein sequencing</keyword>
<keyword id="KW-0274">FAD</keyword>
<keyword id="KW-0285">Flavoprotein</keyword>
<keyword id="KW-0472">Membrane</keyword>
<keyword id="KW-0521">NADP</keyword>
<keyword id="KW-0560">Oxidoreductase</keyword>
<keyword id="KW-0614">Plasmid</keyword>
<accession>P11295</accession>
<accession>O06897</accession>
<accession>O30770</accession>
<geneLocation type="plasmid">
    <name>IncFI ColV3-K30</name>
</geneLocation>
<geneLocation type="plasmid">
    <name>ColV-K311</name>
</geneLocation>
<protein>
    <recommendedName>
        <fullName>L-lysine N6-monooxygenase</fullName>
        <ecNumber evidence="4">1.14.13.59</ecNumber>
    </recommendedName>
    <alternativeName>
        <fullName>Lysine 6-N-hydroxylase</fullName>
    </alternativeName>
    <alternativeName>
        <fullName>Lysine N6-hydroxylase</fullName>
    </alternativeName>
    <alternativeName>
        <fullName>Lysine-N-oxygenase</fullName>
    </alternativeName>
</protein>
<reference key="1">
    <citation type="journal article" date="1988" name="J. Bacteriol.">
        <title>Nucleotide sequence of the iucD gene of the pColV-K30 aerobactin operon and topology of its product studied with phoA and lacZ gene fusions.</title>
        <authorList>
            <person name="Herrero M."/>
            <person name="de Lorenzo V."/>
            <person name="Neilands J.B."/>
        </authorList>
    </citation>
    <scope>NUCLEOTIDE SEQUENCE [GENOMIC DNA]</scope>
    <scope>PROTEIN SEQUENCE OF 1-15</scope>
    <source>
        <plasmid>IncFI ColV3-K30</plasmid>
    </source>
</reference>
<reference key="2">
    <citation type="submission" date="1997-06" db="EMBL/GenBank/DDBJ databases">
        <authorList>
            <person name="Marrone L."/>
            <person name="Viswanatha T."/>
        </authorList>
    </citation>
    <scope>NUCLEOTIDE SEQUENCE [GENOMIC DNA]</scope>
    <source>
        <plasmid>IncFI ColV3-K30</plasmid>
    </source>
</reference>
<reference key="3">
    <citation type="journal article" date="1999" name="Biol. Chem.">
        <title>Studies with lysine N6-hydroxylase. Effect of a mutation in the assumed FAD binding site on coenzyme affinities and on lysine hydroxylating activity.</title>
        <authorList>
            <person name="Stehr M."/>
            <person name="Smau L."/>
            <person name="Singh M."/>
            <person name="Seth O."/>
            <person name="Macheroux P."/>
            <person name="Ghisla S."/>
            <person name="Diekmann H."/>
        </authorList>
    </citation>
    <scope>NUCLEOTIDE SEQUENCE [GENOMIC DNA]</scope>
    <scope>MUTAGENESIS OF PRO-14</scope>
    <source>
        <strain>K-311</strain>
        <plasmid>ColV-K311</plasmid>
    </source>
</reference>
<reference key="4">
    <citation type="journal article" date="1986" name="J. Bacteriol.">
        <title>Aerobactin biosynthesis and transport genes of plasmid ColV-K30 in Escherichia coli K-12.</title>
        <authorList>
            <person name="de Lorenzo V."/>
            <person name="Bindereif A."/>
            <person name="Paw B.H."/>
            <person name="Neilands J.B."/>
        </authorList>
    </citation>
    <scope>FUNCTION AS A MONOOXYGENASE AND IN AEROBACTIN BIOSYNTHESIS</scope>
    <scope>NOMENCLATURE</scope>
    <scope>CATALYTIC ACTIVITY</scope>
    <scope>PATHWAY</scope>
</reference>
<dbReference type="EC" id="1.14.13.59" evidence="4"/>
<dbReference type="EMBL" id="M18968">
    <property type="protein sequence ID" value="AAA23196.1"/>
    <property type="molecule type" value="Genomic_DNA"/>
</dbReference>
<dbReference type="EMBL" id="U90207">
    <property type="protein sequence ID" value="AAC00523.1"/>
    <property type="molecule type" value="Genomic_DNA"/>
</dbReference>
<dbReference type="EMBL" id="AF016586">
    <property type="protein sequence ID" value="AAB71391.1"/>
    <property type="molecule type" value="Genomic_DNA"/>
</dbReference>
<dbReference type="EMBL" id="AF016587">
    <property type="protein sequence ID" value="AAB71392.1"/>
    <property type="molecule type" value="Genomic_DNA"/>
</dbReference>
<dbReference type="PIR" id="A28665">
    <property type="entry name" value="BVECID"/>
</dbReference>
<dbReference type="RefSeq" id="WP_000750130.1">
    <property type="nucleotide sequence ID" value="NZ_VRWH01000049.1"/>
</dbReference>
<dbReference type="RefSeq" id="YP_002527487.1">
    <property type="nucleotide sequence ID" value="NC_011964.1"/>
</dbReference>
<dbReference type="RefSeq" id="YP_009071166.1">
    <property type="nucleotide sequence ID" value="NC_025179.1"/>
</dbReference>
<dbReference type="SMR" id="P11295"/>
<dbReference type="KEGG" id="ag:AAA23196"/>
<dbReference type="OMA" id="YTRYFHA"/>
<dbReference type="BioCyc" id="MetaCyc:MONOMER-11590"/>
<dbReference type="UniPathway" id="UPA00014"/>
<dbReference type="GO" id="GO:0005737">
    <property type="term" value="C:cytoplasm"/>
    <property type="evidence" value="ECO:0007669"/>
    <property type="project" value="UniProtKB-SubCell"/>
</dbReference>
<dbReference type="GO" id="GO:0005886">
    <property type="term" value="C:plasma membrane"/>
    <property type="evidence" value="ECO:0007669"/>
    <property type="project" value="UniProtKB-SubCell"/>
</dbReference>
<dbReference type="GO" id="GO:0047091">
    <property type="term" value="F:L-lysine 6-monooxygenase (NADPH) activity"/>
    <property type="evidence" value="ECO:0000315"/>
    <property type="project" value="UniProtKB"/>
</dbReference>
<dbReference type="GO" id="GO:0019270">
    <property type="term" value="P:aerobactin biosynthetic process"/>
    <property type="evidence" value="ECO:0000315"/>
    <property type="project" value="UniProtKB"/>
</dbReference>
<dbReference type="FunFam" id="3.50.50.60:FF:000135">
    <property type="entry name" value="L-lysine 6-monooxygenase IucD"/>
    <property type="match status" value="1"/>
</dbReference>
<dbReference type="Gene3D" id="3.50.50.60">
    <property type="entry name" value="FAD/NAD(P)-binding domain"/>
    <property type="match status" value="1"/>
</dbReference>
<dbReference type="InterPro" id="IPR036188">
    <property type="entry name" value="FAD/NAD-bd_sf"/>
</dbReference>
<dbReference type="InterPro" id="IPR025700">
    <property type="entry name" value="Lys/Orn_oxygenase"/>
</dbReference>
<dbReference type="PANTHER" id="PTHR42802:SF1">
    <property type="entry name" value="L-ORNITHINE N(5)-MONOOXYGENASE"/>
    <property type="match status" value="1"/>
</dbReference>
<dbReference type="PANTHER" id="PTHR42802">
    <property type="entry name" value="MONOOXYGENASE"/>
    <property type="match status" value="1"/>
</dbReference>
<dbReference type="Pfam" id="PF13434">
    <property type="entry name" value="Lys_Orn_oxgnase"/>
    <property type="match status" value="1"/>
</dbReference>
<dbReference type="SUPFAM" id="SSF51905">
    <property type="entry name" value="FAD/NAD(P)-binding domain"/>
    <property type="match status" value="2"/>
</dbReference>
<proteinExistence type="evidence at protein level"/>
<evidence type="ECO:0000250" key="1">
    <source>
        <dbReference type="UniProtKB" id="E9QYP0"/>
    </source>
</evidence>
<evidence type="ECO:0000255" key="2"/>
<evidence type="ECO:0000269" key="3">
    <source>
    </source>
</evidence>
<evidence type="ECO:0000269" key="4">
    <source>
    </source>
</evidence>
<evidence type="ECO:0000303" key="5">
    <source>
    </source>
</evidence>
<evidence type="ECO:0000305" key="6"/>
<evidence type="ECO:0000305" key="7">
    <source>
    </source>
</evidence>
<name>IUCD_ECOLX</name>
<comment type="function">
    <text evidence="4">Flavoprotein monooxygenase required for N-hydroxylation of lysine. Involved in the biosynthesis of the siderophore aerobactin which is a chelator that mediates the high-affinity iron transport systems induced by the organism under iron-stressed conditions.</text>
</comment>
<comment type="catalytic activity">
    <reaction evidence="4">
        <text>L-lysine + NADPH + O2 = N(6)-hydroxy-L-lysine + NADP(+) + H2O</text>
        <dbReference type="Rhea" id="RHEA:23228"/>
        <dbReference type="ChEBI" id="CHEBI:15377"/>
        <dbReference type="ChEBI" id="CHEBI:15379"/>
        <dbReference type="ChEBI" id="CHEBI:32551"/>
        <dbReference type="ChEBI" id="CHEBI:57783"/>
        <dbReference type="ChEBI" id="CHEBI:57820"/>
        <dbReference type="ChEBI" id="CHEBI:58349"/>
        <dbReference type="EC" id="1.14.13.59"/>
    </reaction>
    <physiologicalReaction direction="left-to-right" evidence="4">
        <dbReference type="Rhea" id="RHEA:23229"/>
    </physiologicalReaction>
</comment>
<comment type="cofactor">
    <cofactor evidence="1">
        <name>FAD</name>
        <dbReference type="ChEBI" id="CHEBI:57692"/>
    </cofactor>
</comment>
<comment type="pathway">
    <text evidence="7">Siderophore biosynthesis; aerobactin biosynthesis.</text>
</comment>
<comment type="subcellular location">
    <subcellularLocation>
        <location>Cytoplasm</location>
    </subcellularLocation>
    <subcellularLocation>
        <location evidence="6">Cell membrane</location>
    </subcellularLocation>
</comment>
<comment type="similarity">
    <text evidence="6">Belongs to the lysine N(6)-hydroxylase/L-ornithine N(5)-oxygenase family.</text>
</comment>
<sequence length="425" mass="48726">MKKSVDFIGVGTGPFNLSIAALSHQIEELDCLFFDEHPHFSWHPGMLVPDCHMQTVFLKDLVSAVAPTNPYSFVNYLVKHKKFYRFLTSRLRTVSREEFSDYLRWAAEDMNNLYFSHTVENIDFDKKRRLFLVQTSQGEYFARNICLGTGKQPYLPPCVKHMTQSCFHASEMNLRRPDLSGKRITVVGGGQSGADLFLNALRGEWGEAAEINWVSRRNNFNALDEAAFADEYFTPEYISGFSGLEEDIRHQLLDEQKMTSDGITADSLLTIYRELYHRFEVLRKPRNIRLLPSRSVTTLESSGPGWKLLMEHHLDQGRESLESDVVIFATGYRSALPQILPSLMPLITMHDKNTFKVRDDFTLEWSGPKENNIFVVNASMQTHGIAEPQLSLMAWRSARILNRVMGRDLFDLSMPPALIQWRSGT</sequence>
<gene>
    <name evidence="5" type="primary">iucD</name>
    <name type="synonym">aerA</name>
</gene>
<feature type="chain" id="PRO_0000204028" description="L-lysine N6-monooxygenase">
    <location>
        <begin position="1"/>
        <end position="425"/>
    </location>
</feature>
<feature type="binding site" evidence="2">
    <location>
        <begin position="8"/>
        <end position="14"/>
    </location>
    <ligand>
        <name>FAD</name>
        <dbReference type="ChEBI" id="CHEBI:57692"/>
    </ligand>
</feature>
<feature type="mutagenesis site" description="Low activity." evidence="3">
    <original>P</original>
    <variation>G</variation>
    <location>
        <position position="14"/>
    </location>
</feature>
<feature type="sequence conflict" description="In Ref. 1; AAA23196." evidence="6" ref="1">
    <original>E</original>
    <variation>Q</variation>
    <location>
        <position position="139"/>
    </location>
</feature>
<feature type="sequence conflict" description="In Ref. 1; AAA23196." evidence="6" ref="1">
    <original>M</original>
    <variation>S</variation>
    <location>
        <position position="172"/>
    </location>
</feature>
<feature type="sequence conflict" description="In Ref. 1; AAA23196." evidence="6" ref="1">
    <original>E</original>
    <variation>D</variation>
    <location>
        <position position="231"/>
    </location>
</feature>
<feature type="sequence conflict" description="In Ref. 1; AAA23196." evidence="6" ref="1">
    <original>MTSDGITADS</original>
    <variation>TDIGWHHCPIL</variation>
    <location>
        <begin position="258"/>
        <end position="267"/>
    </location>
</feature>